<feature type="chain" id="PRO_0000055426" description="Protein-export protein SecB">
    <location>
        <begin position="1"/>
        <end position="167"/>
    </location>
</feature>
<organism>
    <name type="scientific">Wolbachia sp. subsp. Brugia malayi (strain TRS)</name>
    <dbReference type="NCBI Taxonomy" id="292805"/>
    <lineage>
        <taxon>Bacteria</taxon>
        <taxon>Pseudomonadati</taxon>
        <taxon>Pseudomonadota</taxon>
        <taxon>Alphaproteobacteria</taxon>
        <taxon>Rickettsiales</taxon>
        <taxon>Anaplasmataceae</taxon>
        <taxon>Wolbachieae</taxon>
        <taxon>Wolbachia</taxon>
    </lineage>
</organism>
<proteinExistence type="inferred from homology"/>
<evidence type="ECO:0000255" key="1">
    <source>
        <dbReference type="HAMAP-Rule" id="MF_00821"/>
    </source>
</evidence>
<protein>
    <recommendedName>
        <fullName evidence="1">Protein-export protein SecB</fullName>
    </recommendedName>
</protein>
<sequence length="167" mass="18817">MSQQKMRIHNQYVKDLSLENPNSPFLSLKEVPNIDVMVNVNSVKLEGSEGTEGESEEKSFHEITLHIEAKAMIKDENIKDGVAFICETKYCGIFSVENFAELSTEEVNRALFIGGPTFLFPFAREVIARVTSSGGFPPLMLDPIDFEAMYEQQSRQQKSNASNENFN</sequence>
<name>SECB_WOLTR</name>
<gene>
    <name evidence="1" type="primary">secB</name>
    <name type="ordered locus">Wbm0541</name>
</gene>
<keyword id="KW-0143">Chaperone</keyword>
<keyword id="KW-0963">Cytoplasm</keyword>
<keyword id="KW-0653">Protein transport</keyword>
<keyword id="KW-1185">Reference proteome</keyword>
<keyword id="KW-0811">Translocation</keyword>
<keyword id="KW-0813">Transport</keyword>
<reference key="1">
    <citation type="journal article" date="2005" name="PLoS Biol.">
        <title>The Wolbachia genome of Brugia malayi: endosymbiont evolution within a human pathogenic nematode.</title>
        <authorList>
            <person name="Foster J."/>
            <person name="Ganatra M."/>
            <person name="Kamal I."/>
            <person name="Ware J."/>
            <person name="Makarova K."/>
            <person name="Ivanova N."/>
            <person name="Bhattacharyya A."/>
            <person name="Kapatral V."/>
            <person name="Kumar S."/>
            <person name="Posfai J."/>
            <person name="Vincze T."/>
            <person name="Ingram J."/>
            <person name="Moran L."/>
            <person name="Lapidus A."/>
            <person name="Omelchenko M."/>
            <person name="Kyrpides N."/>
            <person name="Ghedin E."/>
            <person name="Wang S."/>
            <person name="Goltsman E."/>
            <person name="Joukov V."/>
            <person name="Ostrovskaya O."/>
            <person name="Tsukerman K."/>
            <person name="Mazur M."/>
            <person name="Comb D."/>
            <person name="Koonin E."/>
            <person name="Slatko B."/>
        </authorList>
    </citation>
    <scope>NUCLEOTIDE SEQUENCE [LARGE SCALE GENOMIC DNA]</scope>
    <source>
        <strain>TRS</strain>
    </source>
</reference>
<comment type="function">
    <text evidence="1">One of the proteins required for the normal export of preproteins out of the cell cytoplasm. It is a molecular chaperone that binds to a subset of precursor proteins, maintaining them in a translocation-competent state. It also specifically binds to its receptor SecA.</text>
</comment>
<comment type="subunit">
    <text evidence="1">Homotetramer, a dimer of dimers. One homotetramer interacts with 1 SecA dimer.</text>
</comment>
<comment type="subcellular location">
    <subcellularLocation>
        <location evidence="1">Cytoplasm</location>
    </subcellularLocation>
</comment>
<comment type="similarity">
    <text evidence="1">Belongs to the SecB family.</text>
</comment>
<accession>Q5GS95</accession>
<dbReference type="EMBL" id="AE017321">
    <property type="protein sequence ID" value="AAW71129.1"/>
    <property type="molecule type" value="Genomic_DNA"/>
</dbReference>
<dbReference type="RefSeq" id="WP_011256739.1">
    <property type="nucleotide sequence ID" value="NC_006833.1"/>
</dbReference>
<dbReference type="SMR" id="Q5GS95"/>
<dbReference type="STRING" id="292805.Wbm0541"/>
<dbReference type="KEGG" id="wbm:Wbm0541"/>
<dbReference type="eggNOG" id="COG1952">
    <property type="taxonomic scope" value="Bacteria"/>
</dbReference>
<dbReference type="HOGENOM" id="CLU_111574_1_0_5"/>
<dbReference type="Proteomes" id="UP000000534">
    <property type="component" value="Chromosome"/>
</dbReference>
<dbReference type="GO" id="GO:0005737">
    <property type="term" value="C:cytoplasm"/>
    <property type="evidence" value="ECO:0007669"/>
    <property type="project" value="UniProtKB-SubCell"/>
</dbReference>
<dbReference type="GO" id="GO:0051082">
    <property type="term" value="F:unfolded protein binding"/>
    <property type="evidence" value="ECO:0007669"/>
    <property type="project" value="InterPro"/>
</dbReference>
<dbReference type="GO" id="GO:0006457">
    <property type="term" value="P:protein folding"/>
    <property type="evidence" value="ECO:0007669"/>
    <property type="project" value="UniProtKB-UniRule"/>
</dbReference>
<dbReference type="GO" id="GO:0051262">
    <property type="term" value="P:protein tetramerization"/>
    <property type="evidence" value="ECO:0007669"/>
    <property type="project" value="InterPro"/>
</dbReference>
<dbReference type="GO" id="GO:0015031">
    <property type="term" value="P:protein transport"/>
    <property type="evidence" value="ECO:0007669"/>
    <property type="project" value="UniProtKB-UniRule"/>
</dbReference>
<dbReference type="Gene3D" id="3.10.420.10">
    <property type="entry name" value="SecB-like"/>
    <property type="match status" value="1"/>
</dbReference>
<dbReference type="HAMAP" id="MF_00821">
    <property type="entry name" value="SecB"/>
    <property type="match status" value="1"/>
</dbReference>
<dbReference type="InterPro" id="IPR003708">
    <property type="entry name" value="SecB"/>
</dbReference>
<dbReference type="InterPro" id="IPR035958">
    <property type="entry name" value="SecB-like_sf"/>
</dbReference>
<dbReference type="NCBIfam" id="NF004392">
    <property type="entry name" value="PRK05751.1-3"/>
    <property type="match status" value="1"/>
</dbReference>
<dbReference type="NCBIfam" id="TIGR00809">
    <property type="entry name" value="secB"/>
    <property type="match status" value="1"/>
</dbReference>
<dbReference type="PANTHER" id="PTHR36918">
    <property type="match status" value="1"/>
</dbReference>
<dbReference type="PANTHER" id="PTHR36918:SF1">
    <property type="entry name" value="PROTEIN-EXPORT PROTEIN SECB"/>
    <property type="match status" value="1"/>
</dbReference>
<dbReference type="Pfam" id="PF02556">
    <property type="entry name" value="SecB"/>
    <property type="match status" value="1"/>
</dbReference>
<dbReference type="SUPFAM" id="SSF54611">
    <property type="entry name" value="SecB-like"/>
    <property type="match status" value="1"/>
</dbReference>